<accession>Q79VG6</accession>
<accession>Q9FDR6</accession>
<comment type="function">
    <text evidence="1">Produces ATP from ADP in the presence of a proton gradient across the membrane. The gamma chain is believed to be important in regulating ATPase activity and the flow of protons through the CF(0) complex.</text>
</comment>
<comment type="subunit">
    <text evidence="1">F-type ATPases have 2 components, CF(1) - the catalytic core - and CF(0) - the membrane proton channel. CF(1) has five subunits: alpha(3), beta(3), gamma(1), delta(1), epsilon(1). CF(0) has three main subunits: a, b and c.</text>
</comment>
<comment type="subcellular location">
    <subcellularLocation>
        <location evidence="1">Cell membrane</location>
        <topology evidence="1">Peripheral membrane protein</topology>
    </subcellularLocation>
</comment>
<comment type="similarity">
    <text evidence="1">Belongs to the ATPase gamma chain family.</text>
</comment>
<gene>
    <name evidence="1" type="primary">atpG</name>
    <name type="ordered locus">Cgl1211</name>
    <name type="ordered locus">cg1367</name>
</gene>
<feature type="chain" id="PRO_0000073272" description="ATP synthase gamma chain">
    <location>
        <begin position="1"/>
        <end position="325"/>
    </location>
</feature>
<evidence type="ECO:0000255" key="1">
    <source>
        <dbReference type="HAMAP-Rule" id="MF_00815"/>
    </source>
</evidence>
<organism>
    <name type="scientific">Corynebacterium glutamicum (strain ATCC 13032 / DSM 20300 / JCM 1318 / BCRC 11384 / CCUG 27702 / LMG 3730 / NBRC 12168 / NCIMB 10025 / NRRL B-2784 / 534)</name>
    <dbReference type="NCBI Taxonomy" id="196627"/>
    <lineage>
        <taxon>Bacteria</taxon>
        <taxon>Bacillati</taxon>
        <taxon>Actinomycetota</taxon>
        <taxon>Actinomycetes</taxon>
        <taxon>Mycobacteriales</taxon>
        <taxon>Corynebacteriaceae</taxon>
        <taxon>Corynebacterium</taxon>
    </lineage>
</organism>
<proteinExistence type="inferred from homology"/>
<dbReference type="EMBL" id="AB046112">
    <property type="protein sequence ID" value="BAB08156.1"/>
    <property type="molecule type" value="Genomic_DNA"/>
</dbReference>
<dbReference type="EMBL" id="BA000036">
    <property type="protein sequence ID" value="BAB98604.1"/>
    <property type="molecule type" value="Genomic_DNA"/>
</dbReference>
<dbReference type="EMBL" id="BX927151">
    <property type="protein sequence ID" value="CAF19915.1"/>
    <property type="molecule type" value="Genomic_DNA"/>
</dbReference>
<dbReference type="RefSeq" id="NP_600436.1">
    <property type="nucleotide sequence ID" value="NC_003450.3"/>
</dbReference>
<dbReference type="RefSeq" id="WP_011014203.1">
    <property type="nucleotide sequence ID" value="NC_006958.1"/>
</dbReference>
<dbReference type="SMR" id="Q79VG6"/>
<dbReference type="STRING" id="196627.cg1367"/>
<dbReference type="KEGG" id="cgb:cg1367"/>
<dbReference type="KEGG" id="cgl:Cgl1211"/>
<dbReference type="PATRIC" id="fig|196627.13.peg.1190"/>
<dbReference type="eggNOG" id="COG0224">
    <property type="taxonomic scope" value="Bacteria"/>
</dbReference>
<dbReference type="HOGENOM" id="CLU_050669_0_0_11"/>
<dbReference type="OrthoDB" id="9812769at2"/>
<dbReference type="BioCyc" id="CORYNE:G18NG-10784-MONOMER"/>
<dbReference type="Proteomes" id="UP000000582">
    <property type="component" value="Chromosome"/>
</dbReference>
<dbReference type="Proteomes" id="UP000001009">
    <property type="component" value="Chromosome"/>
</dbReference>
<dbReference type="GO" id="GO:0005886">
    <property type="term" value="C:plasma membrane"/>
    <property type="evidence" value="ECO:0007669"/>
    <property type="project" value="UniProtKB-SubCell"/>
</dbReference>
<dbReference type="GO" id="GO:0045259">
    <property type="term" value="C:proton-transporting ATP synthase complex"/>
    <property type="evidence" value="ECO:0007669"/>
    <property type="project" value="UniProtKB-KW"/>
</dbReference>
<dbReference type="GO" id="GO:0005524">
    <property type="term" value="F:ATP binding"/>
    <property type="evidence" value="ECO:0007669"/>
    <property type="project" value="UniProtKB-UniRule"/>
</dbReference>
<dbReference type="GO" id="GO:0046933">
    <property type="term" value="F:proton-transporting ATP synthase activity, rotational mechanism"/>
    <property type="evidence" value="ECO:0007669"/>
    <property type="project" value="UniProtKB-UniRule"/>
</dbReference>
<dbReference type="GO" id="GO:0042777">
    <property type="term" value="P:proton motive force-driven plasma membrane ATP synthesis"/>
    <property type="evidence" value="ECO:0007669"/>
    <property type="project" value="UniProtKB-UniRule"/>
</dbReference>
<dbReference type="CDD" id="cd12151">
    <property type="entry name" value="F1-ATPase_gamma"/>
    <property type="match status" value="1"/>
</dbReference>
<dbReference type="Gene3D" id="3.40.1380.10">
    <property type="match status" value="1"/>
</dbReference>
<dbReference type="Gene3D" id="1.10.287.80">
    <property type="entry name" value="ATP synthase, gamma subunit, helix hairpin domain"/>
    <property type="match status" value="2"/>
</dbReference>
<dbReference type="HAMAP" id="MF_00815">
    <property type="entry name" value="ATP_synth_gamma_bact"/>
    <property type="match status" value="1"/>
</dbReference>
<dbReference type="InterPro" id="IPR035968">
    <property type="entry name" value="ATP_synth_F1_ATPase_gsu"/>
</dbReference>
<dbReference type="InterPro" id="IPR000131">
    <property type="entry name" value="ATP_synth_F1_gsu"/>
</dbReference>
<dbReference type="InterPro" id="IPR023632">
    <property type="entry name" value="ATP_synth_F1_gsu_CS"/>
</dbReference>
<dbReference type="NCBIfam" id="TIGR01146">
    <property type="entry name" value="ATPsyn_F1gamma"/>
    <property type="match status" value="1"/>
</dbReference>
<dbReference type="NCBIfam" id="NF004145">
    <property type="entry name" value="PRK05621.1-2"/>
    <property type="match status" value="1"/>
</dbReference>
<dbReference type="PANTHER" id="PTHR11693">
    <property type="entry name" value="ATP SYNTHASE GAMMA CHAIN"/>
    <property type="match status" value="1"/>
</dbReference>
<dbReference type="PANTHER" id="PTHR11693:SF22">
    <property type="entry name" value="ATP SYNTHASE SUBUNIT GAMMA, MITOCHONDRIAL"/>
    <property type="match status" value="1"/>
</dbReference>
<dbReference type="Pfam" id="PF00231">
    <property type="entry name" value="ATP-synt"/>
    <property type="match status" value="1"/>
</dbReference>
<dbReference type="PRINTS" id="PR00126">
    <property type="entry name" value="ATPASEGAMMA"/>
</dbReference>
<dbReference type="SUPFAM" id="SSF52943">
    <property type="entry name" value="ATP synthase (F1-ATPase), gamma subunit"/>
    <property type="match status" value="1"/>
</dbReference>
<dbReference type="PROSITE" id="PS00153">
    <property type="entry name" value="ATPASE_GAMMA"/>
    <property type="match status" value="1"/>
</dbReference>
<reference key="1">
    <citation type="submission" date="2000-07" db="EMBL/GenBank/DDBJ databases">
        <title>Nucleotide sequence of atp operon of Corynebacterium glutamicum.</title>
        <authorList>
            <person name="Sekine H."/>
            <person name="Yokota A."/>
            <person name="Tomita F."/>
        </authorList>
    </citation>
    <scope>NUCLEOTIDE SEQUENCE [GENOMIC DNA]</scope>
    <source>
        <strain>ATCC 13060 / LMG 3653 / NCIB 10333 / 614</strain>
    </source>
</reference>
<reference key="2">
    <citation type="journal article" date="2003" name="Appl. Microbiol. Biotechnol.">
        <title>The Corynebacterium glutamicum genome: features and impacts on biotechnological processes.</title>
        <authorList>
            <person name="Ikeda M."/>
            <person name="Nakagawa S."/>
        </authorList>
    </citation>
    <scope>NUCLEOTIDE SEQUENCE [LARGE SCALE GENOMIC DNA]</scope>
    <source>
        <strain>ATCC 13032 / DSM 20300 / JCM 1318 / BCRC 11384 / CCUG 27702 / LMG 3730 / NBRC 12168 / NCIMB 10025 / NRRL B-2784 / 534</strain>
    </source>
</reference>
<reference key="3">
    <citation type="journal article" date="2003" name="J. Biotechnol.">
        <title>The complete Corynebacterium glutamicum ATCC 13032 genome sequence and its impact on the production of L-aspartate-derived amino acids and vitamins.</title>
        <authorList>
            <person name="Kalinowski J."/>
            <person name="Bathe B."/>
            <person name="Bartels D."/>
            <person name="Bischoff N."/>
            <person name="Bott M."/>
            <person name="Burkovski A."/>
            <person name="Dusch N."/>
            <person name="Eggeling L."/>
            <person name="Eikmanns B.J."/>
            <person name="Gaigalat L."/>
            <person name="Goesmann A."/>
            <person name="Hartmann M."/>
            <person name="Huthmacher K."/>
            <person name="Kraemer R."/>
            <person name="Linke B."/>
            <person name="McHardy A.C."/>
            <person name="Meyer F."/>
            <person name="Moeckel B."/>
            <person name="Pfefferle W."/>
            <person name="Puehler A."/>
            <person name="Rey D.A."/>
            <person name="Rueckert C."/>
            <person name="Rupp O."/>
            <person name="Sahm H."/>
            <person name="Wendisch V.F."/>
            <person name="Wiegraebe I."/>
            <person name="Tauch A."/>
        </authorList>
    </citation>
    <scope>NUCLEOTIDE SEQUENCE [LARGE SCALE GENOMIC DNA]</scope>
    <source>
        <strain>ATCC 13032 / DSM 20300 / JCM 1318 / BCRC 11384 / CCUG 27702 / LMG 3730 / NBRC 12168 / NCIMB 10025 / NRRL B-2784 / 534</strain>
    </source>
</reference>
<keyword id="KW-0066">ATP synthesis</keyword>
<keyword id="KW-1003">Cell membrane</keyword>
<keyword id="KW-0139">CF(1)</keyword>
<keyword id="KW-0375">Hydrogen ion transport</keyword>
<keyword id="KW-0406">Ion transport</keyword>
<keyword id="KW-0472">Membrane</keyword>
<keyword id="KW-1185">Reference proteome</keyword>
<keyword id="KW-0813">Transport</keyword>
<protein>
    <recommendedName>
        <fullName evidence="1">ATP synthase gamma chain</fullName>
    </recommendedName>
    <alternativeName>
        <fullName evidence="1">ATP synthase F1 sector gamma subunit</fullName>
    </alternativeName>
    <alternativeName>
        <fullName evidence="1">F-ATPase gamma subunit</fullName>
    </alternativeName>
</protein>
<name>ATPG_CORGL</name>
<sequence length="325" mass="35740">MATIRELRDRIRSVNSTKKITKAQELIATSRITKAQGRVAAAAPYAEEIQRVLERLASASSLDHPMLREREGGKRAAVLVVTSDRGMAGGYNHNVLKKAAELEKLLAESGYEVVRYVTGKKGVDYYKFRAEDVAGTWTGFSQDPDWAATHNVRRHLIDGFTASSEGEAAWREGLNLPEGQDIQGFDQVHVVYTEFISMLTQNPVVHQLLPVEPVIEDEIFEKGEDLLSSSGEVEPDYEFEPDADTLLEALLPQYVSRRLFSIFLEAAAAESASRRNAMKSATDNATELVKDLSRVANQARQAQITQEITEIVGGAGALADSGESD</sequence>